<protein>
    <recommendedName>
        <fullName evidence="1">Large ribosomal subunit protein bL31B</fullName>
    </recommendedName>
    <alternativeName>
        <fullName evidence="2">50S ribosomal protein L31 type B</fullName>
    </alternativeName>
</protein>
<proteinExistence type="inferred from homology"/>
<accession>Q1CL42</accession>
<accession>C4GQN4</accession>
<sequence length="86" mass="9795">MKPNIHPPYRTVVFHDTSADAYFTVGSTIATERTIERDGQTYPYVTLDISSASHPYYTGKQKEFAKEGSTARFHQRFGSFLTKKTN</sequence>
<dbReference type="EMBL" id="CP000305">
    <property type="protein sequence ID" value="ABG17288.1"/>
    <property type="molecule type" value="Genomic_DNA"/>
</dbReference>
<dbReference type="EMBL" id="ACNQ01000008">
    <property type="protein sequence ID" value="EEO77375.1"/>
    <property type="molecule type" value="Genomic_DNA"/>
</dbReference>
<dbReference type="RefSeq" id="WP_002208617.1">
    <property type="nucleotide sequence ID" value="NZ_ACNQ01000008.1"/>
</dbReference>
<dbReference type="SMR" id="Q1CL42"/>
<dbReference type="KEGG" id="ypn:YPN_0956"/>
<dbReference type="HOGENOM" id="CLU_114306_2_1_6"/>
<dbReference type="Proteomes" id="UP000008936">
    <property type="component" value="Chromosome"/>
</dbReference>
<dbReference type="GO" id="GO:1990904">
    <property type="term" value="C:ribonucleoprotein complex"/>
    <property type="evidence" value="ECO:0007669"/>
    <property type="project" value="UniProtKB-KW"/>
</dbReference>
<dbReference type="GO" id="GO:0005840">
    <property type="term" value="C:ribosome"/>
    <property type="evidence" value="ECO:0007669"/>
    <property type="project" value="UniProtKB-KW"/>
</dbReference>
<dbReference type="GO" id="GO:0003735">
    <property type="term" value="F:structural constituent of ribosome"/>
    <property type="evidence" value="ECO:0007669"/>
    <property type="project" value="InterPro"/>
</dbReference>
<dbReference type="GO" id="GO:0006412">
    <property type="term" value="P:translation"/>
    <property type="evidence" value="ECO:0007669"/>
    <property type="project" value="UniProtKB-UniRule"/>
</dbReference>
<dbReference type="Gene3D" id="4.10.830.30">
    <property type="entry name" value="Ribosomal protein L31"/>
    <property type="match status" value="1"/>
</dbReference>
<dbReference type="HAMAP" id="MF_00502">
    <property type="entry name" value="Ribosomal_bL31_2"/>
    <property type="match status" value="1"/>
</dbReference>
<dbReference type="InterPro" id="IPR034704">
    <property type="entry name" value="Ribosomal_bL28/bL31-like_sf"/>
</dbReference>
<dbReference type="InterPro" id="IPR002150">
    <property type="entry name" value="Ribosomal_bL31"/>
</dbReference>
<dbReference type="InterPro" id="IPR027493">
    <property type="entry name" value="Ribosomal_bL31_B"/>
</dbReference>
<dbReference type="InterPro" id="IPR042105">
    <property type="entry name" value="Ribosomal_bL31_sf"/>
</dbReference>
<dbReference type="NCBIfam" id="TIGR00105">
    <property type="entry name" value="L31"/>
    <property type="match status" value="1"/>
</dbReference>
<dbReference type="NCBIfam" id="NF002462">
    <property type="entry name" value="PRK01678.1"/>
    <property type="match status" value="1"/>
</dbReference>
<dbReference type="PANTHER" id="PTHR33280">
    <property type="entry name" value="50S RIBOSOMAL PROTEIN L31, CHLOROPLASTIC"/>
    <property type="match status" value="1"/>
</dbReference>
<dbReference type="PANTHER" id="PTHR33280:SF1">
    <property type="entry name" value="LARGE RIBOSOMAL SUBUNIT PROTEIN BL31C"/>
    <property type="match status" value="1"/>
</dbReference>
<dbReference type="Pfam" id="PF01197">
    <property type="entry name" value="Ribosomal_L31"/>
    <property type="match status" value="1"/>
</dbReference>
<dbReference type="PRINTS" id="PR01249">
    <property type="entry name" value="RIBOSOMALL31"/>
</dbReference>
<dbReference type="SUPFAM" id="SSF143800">
    <property type="entry name" value="L28p-like"/>
    <property type="match status" value="1"/>
</dbReference>
<reference key="1">
    <citation type="journal article" date="2006" name="J. Bacteriol.">
        <title>Complete genome sequence of Yersinia pestis strains Antiqua and Nepal516: evidence of gene reduction in an emerging pathogen.</title>
        <authorList>
            <person name="Chain P.S.G."/>
            <person name="Hu P."/>
            <person name="Malfatti S.A."/>
            <person name="Radnedge L."/>
            <person name="Larimer F."/>
            <person name="Vergez L.M."/>
            <person name="Worsham P."/>
            <person name="Chu M.C."/>
            <person name="Andersen G.L."/>
        </authorList>
    </citation>
    <scope>NUCLEOTIDE SEQUENCE [LARGE SCALE GENOMIC DNA]</scope>
    <source>
        <strain>Nepal516</strain>
    </source>
</reference>
<reference key="2">
    <citation type="submission" date="2009-04" db="EMBL/GenBank/DDBJ databases">
        <title>Yersinia pestis Nepal516A whole genome shotgun sequencing project.</title>
        <authorList>
            <person name="Plunkett G. III"/>
            <person name="Anderson B.D."/>
            <person name="Baumler D.J."/>
            <person name="Burland V."/>
            <person name="Cabot E.L."/>
            <person name="Glasner J.D."/>
            <person name="Mau B."/>
            <person name="Neeno-Eckwall E."/>
            <person name="Perna N.T."/>
            <person name="Munk A.C."/>
            <person name="Tapia R."/>
            <person name="Green L.D."/>
            <person name="Rogers Y.C."/>
            <person name="Detter J.C."/>
            <person name="Bruce D.C."/>
            <person name="Brettin T.S."/>
        </authorList>
    </citation>
    <scope>NUCLEOTIDE SEQUENCE [LARGE SCALE GENOMIC DNA]</scope>
    <source>
        <strain>Nepal516</strain>
    </source>
</reference>
<organism>
    <name type="scientific">Yersinia pestis bv. Antiqua (strain Nepal516)</name>
    <dbReference type="NCBI Taxonomy" id="377628"/>
    <lineage>
        <taxon>Bacteria</taxon>
        <taxon>Pseudomonadati</taxon>
        <taxon>Pseudomonadota</taxon>
        <taxon>Gammaproteobacteria</taxon>
        <taxon>Enterobacterales</taxon>
        <taxon>Yersiniaceae</taxon>
        <taxon>Yersinia</taxon>
    </lineage>
</organism>
<feature type="chain" id="PRO_0000259135" description="Large ribosomal subunit protein bL31B">
    <location>
        <begin position="1"/>
        <end position="86"/>
    </location>
</feature>
<evidence type="ECO:0000255" key="1">
    <source>
        <dbReference type="HAMAP-Rule" id="MF_00502"/>
    </source>
</evidence>
<evidence type="ECO:0000305" key="2"/>
<keyword id="KW-0687">Ribonucleoprotein</keyword>
<keyword id="KW-0689">Ribosomal protein</keyword>
<name>RL31B_YERPN</name>
<gene>
    <name evidence="1" type="primary">rpmE2</name>
    <name type="ordered locus">YPN_0956</name>
    <name type="ORF">YP516_1037</name>
</gene>
<comment type="subunit">
    <text evidence="1">Part of the 50S ribosomal subunit.</text>
</comment>
<comment type="similarity">
    <text evidence="1">Belongs to the bacterial ribosomal protein bL31 family. Type B subfamily.</text>
</comment>